<comment type="function">
    <text evidence="1">Together with the chaperonin GroEL, plays an essential role in assisting protein folding. The GroEL-GroES system forms a nano-cage that allows encapsulation of the non-native substrate proteins and provides a physical environment optimized to promote and accelerate protein folding. GroES binds to the apical surface of the GroEL ring, thereby capping the opening of the GroEL channel.</text>
</comment>
<comment type="subunit">
    <text evidence="1">Heptamer of 7 subunits arranged in a ring. Interacts with the chaperonin GroEL.</text>
</comment>
<comment type="subcellular location">
    <subcellularLocation>
        <location evidence="1">Cytoplasm</location>
    </subcellularLocation>
</comment>
<comment type="similarity">
    <text evidence="1">Belongs to the GroES chaperonin family.</text>
</comment>
<gene>
    <name evidence="1" type="primary">groES</name>
    <name evidence="1" type="synonym">groS</name>
    <name type="ordered locus">Neut_0207</name>
</gene>
<proteinExistence type="inferred from homology"/>
<feature type="chain" id="PRO_1000025311" description="Co-chaperonin GroES">
    <location>
        <begin position="1"/>
        <end position="96"/>
    </location>
</feature>
<evidence type="ECO:0000255" key="1">
    <source>
        <dbReference type="HAMAP-Rule" id="MF_00580"/>
    </source>
</evidence>
<reference key="1">
    <citation type="journal article" date="2007" name="Environ. Microbiol.">
        <title>Whole-genome analysis of the ammonia-oxidizing bacterium, Nitrosomonas eutropha C91: implications for niche adaptation.</title>
        <authorList>
            <person name="Stein L.Y."/>
            <person name="Arp D.J."/>
            <person name="Berube P.M."/>
            <person name="Chain P.S."/>
            <person name="Hauser L."/>
            <person name="Jetten M.S."/>
            <person name="Klotz M.G."/>
            <person name="Larimer F.W."/>
            <person name="Norton J.M."/>
            <person name="Op den Camp H.J.M."/>
            <person name="Shin M."/>
            <person name="Wei X."/>
        </authorList>
    </citation>
    <scope>NUCLEOTIDE SEQUENCE [LARGE SCALE GENOMIC DNA]</scope>
    <source>
        <strain>DSM 101675 / C91 / Nm57</strain>
    </source>
</reference>
<keyword id="KW-0143">Chaperone</keyword>
<keyword id="KW-0963">Cytoplasm</keyword>
<dbReference type="EMBL" id="CP000450">
    <property type="protein sequence ID" value="ABI58493.1"/>
    <property type="molecule type" value="Genomic_DNA"/>
</dbReference>
<dbReference type="RefSeq" id="WP_011633338.1">
    <property type="nucleotide sequence ID" value="NC_008344.1"/>
</dbReference>
<dbReference type="SMR" id="Q0AJH8"/>
<dbReference type="STRING" id="335283.Neut_0207"/>
<dbReference type="KEGG" id="net:Neut_0207"/>
<dbReference type="eggNOG" id="COG0234">
    <property type="taxonomic scope" value="Bacteria"/>
</dbReference>
<dbReference type="HOGENOM" id="CLU_132825_1_0_4"/>
<dbReference type="OrthoDB" id="9806791at2"/>
<dbReference type="Proteomes" id="UP000001966">
    <property type="component" value="Chromosome"/>
</dbReference>
<dbReference type="GO" id="GO:0005737">
    <property type="term" value="C:cytoplasm"/>
    <property type="evidence" value="ECO:0007669"/>
    <property type="project" value="UniProtKB-SubCell"/>
</dbReference>
<dbReference type="GO" id="GO:0005524">
    <property type="term" value="F:ATP binding"/>
    <property type="evidence" value="ECO:0007669"/>
    <property type="project" value="InterPro"/>
</dbReference>
<dbReference type="GO" id="GO:0046872">
    <property type="term" value="F:metal ion binding"/>
    <property type="evidence" value="ECO:0007669"/>
    <property type="project" value="TreeGrafter"/>
</dbReference>
<dbReference type="GO" id="GO:0044183">
    <property type="term" value="F:protein folding chaperone"/>
    <property type="evidence" value="ECO:0007669"/>
    <property type="project" value="InterPro"/>
</dbReference>
<dbReference type="GO" id="GO:0051087">
    <property type="term" value="F:protein-folding chaperone binding"/>
    <property type="evidence" value="ECO:0007669"/>
    <property type="project" value="TreeGrafter"/>
</dbReference>
<dbReference type="GO" id="GO:0051082">
    <property type="term" value="F:unfolded protein binding"/>
    <property type="evidence" value="ECO:0007669"/>
    <property type="project" value="TreeGrafter"/>
</dbReference>
<dbReference type="GO" id="GO:0051085">
    <property type="term" value="P:chaperone cofactor-dependent protein refolding"/>
    <property type="evidence" value="ECO:0007669"/>
    <property type="project" value="TreeGrafter"/>
</dbReference>
<dbReference type="CDD" id="cd00320">
    <property type="entry name" value="cpn10"/>
    <property type="match status" value="1"/>
</dbReference>
<dbReference type="FunFam" id="2.30.33.40:FF:000001">
    <property type="entry name" value="10 kDa chaperonin"/>
    <property type="match status" value="1"/>
</dbReference>
<dbReference type="Gene3D" id="2.30.33.40">
    <property type="entry name" value="GroES chaperonin"/>
    <property type="match status" value="1"/>
</dbReference>
<dbReference type="HAMAP" id="MF_00580">
    <property type="entry name" value="CH10"/>
    <property type="match status" value="1"/>
</dbReference>
<dbReference type="InterPro" id="IPR020818">
    <property type="entry name" value="Chaperonin_GroES"/>
</dbReference>
<dbReference type="InterPro" id="IPR037124">
    <property type="entry name" value="Chaperonin_GroES_sf"/>
</dbReference>
<dbReference type="InterPro" id="IPR018369">
    <property type="entry name" value="Chaprnonin_Cpn10_CS"/>
</dbReference>
<dbReference type="InterPro" id="IPR011032">
    <property type="entry name" value="GroES-like_sf"/>
</dbReference>
<dbReference type="NCBIfam" id="NF001527">
    <property type="entry name" value="PRK00364.1-2"/>
    <property type="match status" value="1"/>
</dbReference>
<dbReference type="NCBIfam" id="NF001529">
    <property type="entry name" value="PRK00364.1-5"/>
    <property type="match status" value="1"/>
</dbReference>
<dbReference type="NCBIfam" id="NF001531">
    <property type="entry name" value="PRK00364.2-2"/>
    <property type="match status" value="1"/>
</dbReference>
<dbReference type="NCBIfam" id="NF001533">
    <property type="entry name" value="PRK00364.2-4"/>
    <property type="match status" value="1"/>
</dbReference>
<dbReference type="NCBIfam" id="NF001534">
    <property type="entry name" value="PRK00364.2-5"/>
    <property type="match status" value="1"/>
</dbReference>
<dbReference type="PANTHER" id="PTHR10772">
    <property type="entry name" value="10 KDA HEAT SHOCK PROTEIN"/>
    <property type="match status" value="1"/>
</dbReference>
<dbReference type="PANTHER" id="PTHR10772:SF58">
    <property type="entry name" value="CO-CHAPERONIN GROES"/>
    <property type="match status" value="1"/>
</dbReference>
<dbReference type="Pfam" id="PF00166">
    <property type="entry name" value="Cpn10"/>
    <property type="match status" value="1"/>
</dbReference>
<dbReference type="PRINTS" id="PR00297">
    <property type="entry name" value="CHAPERONIN10"/>
</dbReference>
<dbReference type="SMART" id="SM00883">
    <property type="entry name" value="Cpn10"/>
    <property type="match status" value="1"/>
</dbReference>
<dbReference type="SUPFAM" id="SSF50129">
    <property type="entry name" value="GroES-like"/>
    <property type="match status" value="1"/>
</dbReference>
<dbReference type="PROSITE" id="PS00681">
    <property type="entry name" value="CHAPERONINS_CPN10"/>
    <property type="match status" value="1"/>
</dbReference>
<sequence length="96" mass="10516">MNIRPLHDRVIVKRLEEERKTASGIVIPDTAAEKPDQGEIIAVGKGKAGEDGKIRTLEVKVGDKVLFGKYAGQAVKIKGEEFLVMREEDIMGVIEG</sequence>
<accession>Q0AJH8</accession>
<protein>
    <recommendedName>
        <fullName evidence="1">Co-chaperonin GroES</fullName>
    </recommendedName>
    <alternativeName>
        <fullName evidence="1">10 kDa chaperonin</fullName>
    </alternativeName>
    <alternativeName>
        <fullName evidence="1">Chaperonin-10</fullName>
        <shortName evidence="1">Cpn10</shortName>
    </alternativeName>
</protein>
<name>CH10_NITEC</name>
<organism>
    <name type="scientific">Nitrosomonas eutropha (strain DSM 101675 / C91 / Nm57)</name>
    <dbReference type="NCBI Taxonomy" id="335283"/>
    <lineage>
        <taxon>Bacteria</taxon>
        <taxon>Pseudomonadati</taxon>
        <taxon>Pseudomonadota</taxon>
        <taxon>Betaproteobacteria</taxon>
        <taxon>Nitrosomonadales</taxon>
        <taxon>Nitrosomonadaceae</taxon>
        <taxon>Nitrosomonas</taxon>
    </lineage>
</organism>